<comment type="function">
    <text evidence="1">Involved in the restart of stalled replication forks, which reloads the replicative helicase on sites other than the origin of replication; the PriA-PriB pathway is the major replication restart pathway. During primosome assembly it facilitates complex formation between PriA and DnaT on DNA; stabilizes PriA on DNA. Stimulates the DNA unwinding activity of PriA helicase.</text>
</comment>
<comment type="subunit">
    <text evidence="1">Homodimer. Interacts with PriA and DnaT. Component of the replication restart primosome. Primosome assembly occurs via a 'hand-off' mechanism. PriA binds to replication forks, subsequently PriB then DnaT bind; DnaT then displaces ssDNA to generate the helicase loading substrate.</text>
</comment>
<comment type="similarity">
    <text evidence="1">Belongs to the PriB family.</text>
</comment>
<dbReference type="EMBL" id="CP000057">
    <property type="protein sequence ID" value="AAX87595.1"/>
    <property type="molecule type" value="Genomic_DNA"/>
</dbReference>
<dbReference type="RefSeq" id="WP_005639404.1">
    <property type="nucleotide sequence ID" value="NC_007146.2"/>
</dbReference>
<dbReference type="SMR" id="Q4QN02"/>
<dbReference type="GeneID" id="93219555"/>
<dbReference type="KEGG" id="hit:NTHI0672"/>
<dbReference type="HOGENOM" id="CLU_166075_0_0_6"/>
<dbReference type="Proteomes" id="UP000002525">
    <property type="component" value="Chromosome"/>
</dbReference>
<dbReference type="GO" id="GO:1990077">
    <property type="term" value="C:primosome complex"/>
    <property type="evidence" value="ECO:0007669"/>
    <property type="project" value="UniProtKB-KW"/>
</dbReference>
<dbReference type="GO" id="GO:0003697">
    <property type="term" value="F:single-stranded DNA binding"/>
    <property type="evidence" value="ECO:0007669"/>
    <property type="project" value="UniProtKB-UniRule"/>
</dbReference>
<dbReference type="GO" id="GO:0006269">
    <property type="term" value="P:DNA replication, synthesis of primer"/>
    <property type="evidence" value="ECO:0007669"/>
    <property type="project" value="UniProtKB-KW"/>
</dbReference>
<dbReference type="Gene3D" id="2.40.50.140">
    <property type="entry name" value="Nucleic acid-binding proteins"/>
    <property type="match status" value="1"/>
</dbReference>
<dbReference type="HAMAP" id="MF_00720">
    <property type="entry name" value="PriB"/>
    <property type="match status" value="1"/>
</dbReference>
<dbReference type="InterPro" id="IPR012340">
    <property type="entry name" value="NA-bd_OB-fold"/>
</dbReference>
<dbReference type="InterPro" id="IPR000424">
    <property type="entry name" value="Primosome_PriB/ssb"/>
</dbReference>
<dbReference type="InterPro" id="IPR023646">
    <property type="entry name" value="Prisomal_replication_PriB"/>
</dbReference>
<dbReference type="NCBIfam" id="TIGR04418">
    <property type="entry name" value="PriB_gamma"/>
    <property type="match status" value="1"/>
</dbReference>
<dbReference type="Pfam" id="PF22657">
    <property type="entry name" value="SSB_1"/>
    <property type="match status" value="1"/>
</dbReference>
<dbReference type="PIRSF" id="PIRSF003135">
    <property type="entry name" value="Primosomal_n"/>
    <property type="match status" value="1"/>
</dbReference>
<dbReference type="SUPFAM" id="SSF50249">
    <property type="entry name" value="Nucleic acid-binding proteins"/>
    <property type="match status" value="1"/>
</dbReference>
<dbReference type="PROSITE" id="PS50935">
    <property type="entry name" value="SSB"/>
    <property type="match status" value="1"/>
</dbReference>
<gene>
    <name evidence="1" type="primary">priB</name>
    <name type="ordered locus">NTHI0672</name>
</gene>
<name>PRIB_HAEI8</name>
<evidence type="ECO:0000255" key="1">
    <source>
        <dbReference type="HAMAP-Rule" id="MF_00720"/>
    </source>
</evidence>
<protein>
    <recommendedName>
        <fullName evidence="1">Replication restart protein PriB</fullName>
    </recommendedName>
</protein>
<organism>
    <name type="scientific">Haemophilus influenzae (strain 86-028NP)</name>
    <dbReference type="NCBI Taxonomy" id="281310"/>
    <lineage>
        <taxon>Bacteria</taxon>
        <taxon>Pseudomonadati</taxon>
        <taxon>Pseudomonadota</taxon>
        <taxon>Gammaproteobacteria</taxon>
        <taxon>Pasteurellales</taxon>
        <taxon>Pasteurellaceae</taxon>
        <taxon>Haemophilus</taxon>
    </lineage>
</organism>
<reference key="1">
    <citation type="journal article" date="2005" name="J. Bacteriol.">
        <title>Genomic sequence of an otitis media isolate of nontypeable Haemophilus influenzae: comparative study with H. influenzae serotype d, strain KW20.</title>
        <authorList>
            <person name="Harrison A."/>
            <person name="Dyer D.W."/>
            <person name="Gillaspy A."/>
            <person name="Ray W.C."/>
            <person name="Mungur R."/>
            <person name="Carson M.B."/>
            <person name="Zhong H."/>
            <person name="Gipson J."/>
            <person name="Gipson M."/>
            <person name="Johnson L.S."/>
            <person name="Lewis L."/>
            <person name="Bakaletz L.O."/>
            <person name="Munson R.S. Jr."/>
        </authorList>
    </citation>
    <scope>NUCLEOTIDE SEQUENCE [LARGE SCALE GENOMIC DNA]</scope>
    <source>
        <strain>86-028NP</strain>
    </source>
</reference>
<proteinExistence type="inferred from homology"/>
<feature type="chain" id="PRO_1000083281" description="Replication restart protein PriB">
    <location>
        <begin position="1"/>
        <end position="108"/>
    </location>
</feature>
<feature type="domain" description="SSB" evidence="1">
    <location>
        <begin position="8"/>
        <end position="108"/>
    </location>
</feature>
<keyword id="KW-0235">DNA replication</keyword>
<keyword id="KW-0238">DNA-binding</keyword>
<keyword id="KW-0639">Primosome</keyword>
<accession>Q4QN02</accession>
<sequence length="108" mass="12148">MLKSNLKIDNRFSVMGVVSQLPKRLKSPSGIEHCKFLLEHRSDQIESGFTRQAWLKMPVQISGNQLIEKTQSITVGSKILVVGFITSHKTQSGLCQLVLHAEQIEFID</sequence>